<feature type="chain" id="PRO_0000374783" description="Ribosomal protein uS12 methylthiotransferase RimO">
    <location>
        <begin position="1"/>
        <end position="444"/>
    </location>
</feature>
<feature type="domain" description="MTTase N-terminal" evidence="1">
    <location>
        <begin position="2"/>
        <end position="118"/>
    </location>
</feature>
<feature type="domain" description="Radical SAM core" evidence="2">
    <location>
        <begin position="141"/>
        <end position="371"/>
    </location>
</feature>
<feature type="domain" description="TRAM" evidence="1">
    <location>
        <begin position="374"/>
        <end position="441"/>
    </location>
</feature>
<feature type="binding site" evidence="1">
    <location>
        <position position="11"/>
    </location>
    <ligand>
        <name>[4Fe-4S] cluster</name>
        <dbReference type="ChEBI" id="CHEBI:49883"/>
        <label>1</label>
    </ligand>
</feature>
<feature type="binding site" evidence="1">
    <location>
        <position position="47"/>
    </location>
    <ligand>
        <name>[4Fe-4S] cluster</name>
        <dbReference type="ChEBI" id="CHEBI:49883"/>
        <label>1</label>
    </ligand>
</feature>
<feature type="binding site" evidence="1">
    <location>
        <position position="81"/>
    </location>
    <ligand>
        <name>[4Fe-4S] cluster</name>
        <dbReference type="ChEBI" id="CHEBI:49883"/>
        <label>1</label>
    </ligand>
</feature>
<feature type="binding site" evidence="1">
    <location>
        <position position="155"/>
    </location>
    <ligand>
        <name>[4Fe-4S] cluster</name>
        <dbReference type="ChEBI" id="CHEBI:49883"/>
        <label>2</label>
        <note>4Fe-4S-S-AdoMet</note>
    </ligand>
</feature>
<feature type="binding site" evidence="1">
    <location>
        <position position="159"/>
    </location>
    <ligand>
        <name>[4Fe-4S] cluster</name>
        <dbReference type="ChEBI" id="CHEBI:49883"/>
        <label>2</label>
        <note>4Fe-4S-S-AdoMet</note>
    </ligand>
</feature>
<feature type="binding site" evidence="1">
    <location>
        <position position="162"/>
    </location>
    <ligand>
        <name>[4Fe-4S] cluster</name>
        <dbReference type="ChEBI" id="CHEBI:49883"/>
        <label>2</label>
        <note>4Fe-4S-S-AdoMet</note>
    </ligand>
</feature>
<gene>
    <name evidence="1" type="primary">rimO</name>
    <name type="ordered locus">CD630_13260</name>
</gene>
<evidence type="ECO:0000255" key="1">
    <source>
        <dbReference type="HAMAP-Rule" id="MF_01865"/>
    </source>
</evidence>
<evidence type="ECO:0000255" key="2">
    <source>
        <dbReference type="PROSITE-ProRule" id="PRU01266"/>
    </source>
</evidence>
<sequence>MLKIALESLGCSKNLVDAEIMMGILNNKGYKLIGDFEEADVIIVNTCGFIESAKQESIDTIINFAELKKTGNLKLLIVTGCLAQRYSEELKTEIPEIDAIVGTGSYQNIDKILKELSEIHQIVSLNDIEFVFNEDLPRYISTPSYMAYLKIGEGCSNNCTYCIIPKLRGKYRSRKFEDIIKEAKKLAESGVKELVVIAQDTTKYGFDLYGKERLSELLEELAKIDGFKWIRVMYSYPESITEELIQVIKKYDNICSYFDMPIQHASNNILKLMNRKTTKEDILNKINLIRSNIPDAILRTTIIVGFPGETEDDFKQLVDFVEEVKFDRLGAFAYSREEDTPADRLPNHIDEEVKIQRRDTLMMIQQKISEELNDKKIGKTYEVLIEEQIEDNVYTGRTQGDAEEIDSIVYVKSVDNLEVGEFVSVQINDAMEYDLMGDVLYELA</sequence>
<accession>Q18BJ2</accession>
<protein>
    <recommendedName>
        <fullName evidence="1">Ribosomal protein uS12 methylthiotransferase RimO</fullName>
        <shortName evidence="1">uS12 MTTase</shortName>
        <shortName evidence="1">uS12 methylthiotransferase</shortName>
        <ecNumber evidence="1">2.8.4.4</ecNumber>
    </recommendedName>
    <alternativeName>
        <fullName evidence="1">Ribosomal protein uS12 (aspartate-C(3))-methylthiotransferase</fullName>
    </alternativeName>
    <alternativeName>
        <fullName evidence="1">Ribosome maturation factor RimO</fullName>
    </alternativeName>
</protein>
<reference key="1">
    <citation type="journal article" date="2006" name="Nat. Genet.">
        <title>The multidrug-resistant human pathogen Clostridium difficile has a highly mobile, mosaic genome.</title>
        <authorList>
            <person name="Sebaihia M."/>
            <person name="Wren B.W."/>
            <person name="Mullany P."/>
            <person name="Fairweather N.F."/>
            <person name="Minton N."/>
            <person name="Stabler R."/>
            <person name="Thomson N.R."/>
            <person name="Roberts A.P."/>
            <person name="Cerdeno-Tarraga A.M."/>
            <person name="Wang H."/>
            <person name="Holden M.T.G."/>
            <person name="Wright A."/>
            <person name="Churcher C."/>
            <person name="Quail M.A."/>
            <person name="Baker S."/>
            <person name="Bason N."/>
            <person name="Brooks K."/>
            <person name="Chillingworth T."/>
            <person name="Cronin A."/>
            <person name="Davis P."/>
            <person name="Dowd L."/>
            <person name="Fraser A."/>
            <person name="Feltwell T."/>
            <person name="Hance Z."/>
            <person name="Holroyd S."/>
            <person name="Jagels K."/>
            <person name="Moule S."/>
            <person name="Mungall K."/>
            <person name="Price C."/>
            <person name="Rabbinowitsch E."/>
            <person name="Sharp S."/>
            <person name="Simmonds M."/>
            <person name="Stevens K."/>
            <person name="Unwin L."/>
            <person name="Whithead S."/>
            <person name="Dupuy B."/>
            <person name="Dougan G."/>
            <person name="Barrell B."/>
            <person name="Parkhill J."/>
        </authorList>
    </citation>
    <scope>NUCLEOTIDE SEQUENCE [LARGE SCALE GENOMIC DNA]</scope>
    <source>
        <strain>630</strain>
    </source>
</reference>
<proteinExistence type="inferred from homology"/>
<organism>
    <name type="scientific">Clostridioides difficile (strain 630)</name>
    <name type="common">Peptoclostridium difficile</name>
    <dbReference type="NCBI Taxonomy" id="272563"/>
    <lineage>
        <taxon>Bacteria</taxon>
        <taxon>Bacillati</taxon>
        <taxon>Bacillota</taxon>
        <taxon>Clostridia</taxon>
        <taxon>Peptostreptococcales</taxon>
        <taxon>Peptostreptococcaceae</taxon>
        <taxon>Clostridioides</taxon>
    </lineage>
</organism>
<name>RIMO_CLOD6</name>
<keyword id="KW-0004">4Fe-4S</keyword>
<keyword id="KW-0963">Cytoplasm</keyword>
<keyword id="KW-0408">Iron</keyword>
<keyword id="KW-0411">Iron-sulfur</keyword>
<keyword id="KW-0479">Metal-binding</keyword>
<keyword id="KW-1185">Reference proteome</keyword>
<keyword id="KW-0949">S-adenosyl-L-methionine</keyword>
<keyword id="KW-0808">Transferase</keyword>
<dbReference type="EC" id="2.8.4.4" evidence="1"/>
<dbReference type="EMBL" id="AM180355">
    <property type="protein sequence ID" value="CAJ68184.1"/>
    <property type="molecule type" value="Genomic_DNA"/>
</dbReference>
<dbReference type="RefSeq" id="WP_011861176.1">
    <property type="nucleotide sequence ID" value="NZ_JAUPES010000015.1"/>
</dbReference>
<dbReference type="RefSeq" id="YP_001087822.1">
    <property type="nucleotide sequence ID" value="NC_009089.1"/>
</dbReference>
<dbReference type="SMR" id="Q18BJ2"/>
<dbReference type="STRING" id="272563.CD630_13260"/>
<dbReference type="EnsemblBacteria" id="CAJ68184">
    <property type="protein sequence ID" value="CAJ68184"/>
    <property type="gene ID" value="CD630_13260"/>
</dbReference>
<dbReference type="KEGG" id="cdf:CD630_13260"/>
<dbReference type="KEGG" id="pdc:CDIF630_01482"/>
<dbReference type="PATRIC" id="fig|272563.120.peg.1386"/>
<dbReference type="eggNOG" id="COG0621">
    <property type="taxonomic scope" value="Bacteria"/>
</dbReference>
<dbReference type="OrthoDB" id="9805215at2"/>
<dbReference type="PhylomeDB" id="Q18BJ2"/>
<dbReference type="BioCyc" id="PDIF272563:G12WB-1461-MONOMER"/>
<dbReference type="Proteomes" id="UP000001978">
    <property type="component" value="Chromosome"/>
</dbReference>
<dbReference type="GO" id="GO:0005829">
    <property type="term" value="C:cytosol"/>
    <property type="evidence" value="ECO:0007669"/>
    <property type="project" value="TreeGrafter"/>
</dbReference>
<dbReference type="GO" id="GO:0051539">
    <property type="term" value="F:4 iron, 4 sulfur cluster binding"/>
    <property type="evidence" value="ECO:0007669"/>
    <property type="project" value="UniProtKB-UniRule"/>
</dbReference>
<dbReference type="GO" id="GO:0035599">
    <property type="term" value="F:aspartic acid methylthiotransferase activity"/>
    <property type="evidence" value="ECO:0007669"/>
    <property type="project" value="TreeGrafter"/>
</dbReference>
<dbReference type="GO" id="GO:0046872">
    <property type="term" value="F:metal ion binding"/>
    <property type="evidence" value="ECO:0007669"/>
    <property type="project" value="UniProtKB-KW"/>
</dbReference>
<dbReference type="GO" id="GO:0103039">
    <property type="term" value="F:protein methylthiotransferase activity"/>
    <property type="evidence" value="ECO:0007669"/>
    <property type="project" value="UniProtKB-EC"/>
</dbReference>
<dbReference type="GO" id="GO:0006400">
    <property type="term" value="P:tRNA modification"/>
    <property type="evidence" value="ECO:0007669"/>
    <property type="project" value="InterPro"/>
</dbReference>
<dbReference type="CDD" id="cd01335">
    <property type="entry name" value="Radical_SAM"/>
    <property type="match status" value="1"/>
</dbReference>
<dbReference type="FunFam" id="3.40.50.12160:FF:000003">
    <property type="entry name" value="CDK5 regulatory subunit-associated protein 1"/>
    <property type="match status" value="1"/>
</dbReference>
<dbReference type="FunFam" id="3.80.30.20:FF:000001">
    <property type="entry name" value="tRNA-2-methylthio-N(6)-dimethylallyladenosine synthase 2"/>
    <property type="match status" value="1"/>
</dbReference>
<dbReference type="Gene3D" id="3.40.50.12160">
    <property type="entry name" value="Methylthiotransferase, N-terminal domain"/>
    <property type="match status" value="1"/>
</dbReference>
<dbReference type="Gene3D" id="2.40.50.140">
    <property type="entry name" value="Nucleic acid-binding proteins"/>
    <property type="match status" value="1"/>
</dbReference>
<dbReference type="Gene3D" id="3.80.30.20">
    <property type="entry name" value="tm_1862 like domain"/>
    <property type="match status" value="1"/>
</dbReference>
<dbReference type="HAMAP" id="MF_01865">
    <property type="entry name" value="MTTase_RimO"/>
    <property type="match status" value="1"/>
</dbReference>
<dbReference type="InterPro" id="IPR006638">
    <property type="entry name" value="Elp3/MiaA/NifB-like_rSAM"/>
</dbReference>
<dbReference type="InterPro" id="IPR005839">
    <property type="entry name" value="Methylthiotransferase"/>
</dbReference>
<dbReference type="InterPro" id="IPR020612">
    <property type="entry name" value="Methylthiotransferase_CS"/>
</dbReference>
<dbReference type="InterPro" id="IPR013848">
    <property type="entry name" value="Methylthiotransferase_N"/>
</dbReference>
<dbReference type="InterPro" id="IPR038135">
    <property type="entry name" value="Methylthiotransferase_N_sf"/>
</dbReference>
<dbReference type="InterPro" id="IPR012340">
    <property type="entry name" value="NA-bd_OB-fold"/>
</dbReference>
<dbReference type="InterPro" id="IPR005840">
    <property type="entry name" value="Ribosomal_uS12_MeSTrfase_RimO"/>
</dbReference>
<dbReference type="InterPro" id="IPR007197">
    <property type="entry name" value="rSAM"/>
</dbReference>
<dbReference type="InterPro" id="IPR023404">
    <property type="entry name" value="rSAM_horseshoe"/>
</dbReference>
<dbReference type="InterPro" id="IPR002792">
    <property type="entry name" value="TRAM_dom"/>
</dbReference>
<dbReference type="NCBIfam" id="TIGR01125">
    <property type="entry name" value="30S ribosomal protein S12 methylthiotransferase RimO"/>
    <property type="match status" value="1"/>
</dbReference>
<dbReference type="NCBIfam" id="TIGR00089">
    <property type="entry name" value="MiaB/RimO family radical SAM methylthiotransferase"/>
    <property type="match status" value="1"/>
</dbReference>
<dbReference type="PANTHER" id="PTHR43837">
    <property type="entry name" value="RIBOSOMAL PROTEIN S12 METHYLTHIOTRANSFERASE RIMO"/>
    <property type="match status" value="1"/>
</dbReference>
<dbReference type="PANTHER" id="PTHR43837:SF1">
    <property type="entry name" value="RIBOSOMAL PROTEIN US12 METHYLTHIOTRANSFERASE RIMO"/>
    <property type="match status" value="1"/>
</dbReference>
<dbReference type="Pfam" id="PF04055">
    <property type="entry name" value="Radical_SAM"/>
    <property type="match status" value="1"/>
</dbReference>
<dbReference type="Pfam" id="PF18693">
    <property type="entry name" value="TRAM_2"/>
    <property type="match status" value="1"/>
</dbReference>
<dbReference type="Pfam" id="PF00919">
    <property type="entry name" value="UPF0004"/>
    <property type="match status" value="1"/>
</dbReference>
<dbReference type="SFLD" id="SFLDG01082">
    <property type="entry name" value="B12-binding_domain_containing"/>
    <property type="match status" value="1"/>
</dbReference>
<dbReference type="SFLD" id="SFLDS00029">
    <property type="entry name" value="Radical_SAM"/>
    <property type="match status" value="1"/>
</dbReference>
<dbReference type="SFLD" id="SFLDF00274">
    <property type="entry name" value="ribosomal_protein_S12_methylth"/>
    <property type="match status" value="1"/>
</dbReference>
<dbReference type="SMART" id="SM00729">
    <property type="entry name" value="Elp3"/>
    <property type="match status" value="1"/>
</dbReference>
<dbReference type="SUPFAM" id="SSF102114">
    <property type="entry name" value="Radical SAM enzymes"/>
    <property type="match status" value="1"/>
</dbReference>
<dbReference type="PROSITE" id="PS51449">
    <property type="entry name" value="MTTASE_N"/>
    <property type="match status" value="1"/>
</dbReference>
<dbReference type="PROSITE" id="PS01278">
    <property type="entry name" value="MTTASE_RADICAL"/>
    <property type="match status" value="1"/>
</dbReference>
<dbReference type="PROSITE" id="PS51918">
    <property type="entry name" value="RADICAL_SAM"/>
    <property type="match status" value="1"/>
</dbReference>
<dbReference type="PROSITE" id="PS50926">
    <property type="entry name" value="TRAM"/>
    <property type="match status" value="1"/>
</dbReference>
<comment type="function">
    <text evidence="1">Catalyzes the methylthiolation of an aspartic acid residue of ribosomal protein uS12.</text>
</comment>
<comment type="catalytic activity">
    <reaction evidence="1">
        <text>L-aspartate(89)-[ribosomal protein uS12]-hydrogen + (sulfur carrier)-SH + AH2 + 2 S-adenosyl-L-methionine = 3-methylsulfanyl-L-aspartate(89)-[ribosomal protein uS12]-hydrogen + (sulfur carrier)-H + 5'-deoxyadenosine + L-methionine + A + S-adenosyl-L-homocysteine + 2 H(+)</text>
        <dbReference type="Rhea" id="RHEA:37087"/>
        <dbReference type="Rhea" id="RHEA-COMP:10460"/>
        <dbReference type="Rhea" id="RHEA-COMP:10461"/>
        <dbReference type="Rhea" id="RHEA-COMP:14737"/>
        <dbReference type="Rhea" id="RHEA-COMP:14739"/>
        <dbReference type="ChEBI" id="CHEBI:13193"/>
        <dbReference type="ChEBI" id="CHEBI:15378"/>
        <dbReference type="ChEBI" id="CHEBI:17319"/>
        <dbReference type="ChEBI" id="CHEBI:17499"/>
        <dbReference type="ChEBI" id="CHEBI:29917"/>
        <dbReference type="ChEBI" id="CHEBI:29961"/>
        <dbReference type="ChEBI" id="CHEBI:57844"/>
        <dbReference type="ChEBI" id="CHEBI:57856"/>
        <dbReference type="ChEBI" id="CHEBI:59789"/>
        <dbReference type="ChEBI" id="CHEBI:64428"/>
        <dbReference type="ChEBI" id="CHEBI:73599"/>
        <dbReference type="EC" id="2.8.4.4"/>
    </reaction>
</comment>
<comment type="cofactor">
    <cofactor evidence="1">
        <name>[4Fe-4S] cluster</name>
        <dbReference type="ChEBI" id="CHEBI:49883"/>
    </cofactor>
    <text evidence="1">Binds 2 [4Fe-4S] clusters. One cluster is coordinated with 3 cysteines and an exchangeable S-adenosyl-L-methionine.</text>
</comment>
<comment type="subcellular location">
    <subcellularLocation>
        <location evidence="1">Cytoplasm</location>
    </subcellularLocation>
</comment>
<comment type="similarity">
    <text evidence="1">Belongs to the methylthiotransferase family. RimO subfamily.</text>
</comment>